<evidence type="ECO:0000250" key="1"/>
<evidence type="ECO:0000255" key="2">
    <source>
        <dbReference type="HAMAP-Rule" id="MF_00403"/>
    </source>
</evidence>
<evidence type="ECO:0000305" key="3"/>
<accession>B7IT14</accession>
<dbReference type="EMBL" id="CP001186">
    <property type="protein sequence ID" value="ACK98172.1"/>
    <property type="molecule type" value="Genomic_DNA"/>
</dbReference>
<dbReference type="RefSeq" id="WP_001142341.1">
    <property type="nucleotide sequence ID" value="NC_011772.1"/>
</dbReference>
<dbReference type="SMR" id="B7IT14"/>
<dbReference type="GeneID" id="92887798"/>
<dbReference type="KEGG" id="bcg:BCG9842_B5200"/>
<dbReference type="HOGENOM" id="CLU_104295_1_2_9"/>
<dbReference type="Proteomes" id="UP000006744">
    <property type="component" value="Chromosome"/>
</dbReference>
<dbReference type="GO" id="GO:0015935">
    <property type="term" value="C:small ribosomal subunit"/>
    <property type="evidence" value="ECO:0007669"/>
    <property type="project" value="InterPro"/>
</dbReference>
<dbReference type="GO" id="GO:0019843">
    <property type="term" value="F:rRNA binding"/>
    <property type="evidence" value="ECO:0007669"/>
    <property type="project" value="UniProtKB-UniRule"/>
</dbReference>
<dbReference type="GO" id="GO:0003735">
    <property type="term" value="F:structural constituent of ribosome"/>
    <property type="evidence" value="ECO:0007669"/>
    <property type="project" value="InterPro"/>
</dbReference>
<dbReference type="GO" id="GO:0000049">
    <property type="term" value="F:tRNA binding"/>
    <property type="evidence" value="ECO:0007669"/>
    <property type="project" value="UniProtKB-UniRule"/>
</dbReference>
<dbReference type="GO" id="GO:0006412">
    <property type="term" value="P:translation"/>
    <property type="evidence" value="ECO:0007669"/>
    <property type="project" value="UniProtKB-UniRule"/>
</dbReference>
<dbReference type="CDD" id="cd03368">
    <property type="entry name" value="Ribosomal_S12"/>
    <property type="match status" value="1"/>
</dbReference>
<dbReference type="FunFam" id="2.40.50.140:FF:000001">
    <property type="entry name" value="30S ribosomal protein S12"/>
    <property type="match status" value="1"/>
</dbReference>
<dbReference type="Gene3D" id="2.40.50.140">
    <property type="entry name" value="Nucleic acid-binding proteins"/>
    <property type="match status" value="1"/>
</dbReference>
<dbReference type="HAMAP" id="MF_00403_B">
    <property type="entry name" value="Ribosomal_uS12_B"/>
    <property type="match status" value="1"/>
</dbReference>
<dbReference type="InterPro" id="IPR012340">
    <property type="entry name" value="NA-bd_OB-fold"/>
</dbReference>
<dbReference type="InterPro" id="IPR006032">
    <property type="entry name" value="Ribosomal_uS12"/>
</dbReference>
<dbReference type="InterPro" id="IPR005679">
    <property type="entry name" value="Ribosomal_uS12_bac"/>
</dbReference>
<dbReference type="NCBIfam" id="TIGR00981">
    <property type="entry name" value="rpsL_bact"/>
    <property type="match status" value="1"/>
</dbReference>
<dbReference type="PANTHER" id="PTHR11652">
    <property type="entry name" value="30S RIBOSOMAL PROTEIN S12 FAMILY MEMBER"/>
    <property type="match status" value="1"/>
</dbReference>
<dbReference type="Pfam" id="PF00164">
    <property type="entry name" value="Ribosom_S12_S23"/>
    <property type="match status" value="1"/>
</dbReference>
<dbReference type="PRINTS" id="PR01034">
    <property type="entry name" value="RIBOSOMALS12"/>
</dbReference>
<dbReference type="SUPFAM" id="SSF50249">
    <property type="entry name" value="Nucleic acid-binding proteins"/>
    <property type="match status" value="1"/>
</dbReference>
<dbReference type="PROSITE" id="PS00055">
    <property type="entry name" value="RIBOSOMAL_S12"/>
    <property type="match status" value="1"/>
</dbReference>
<reference key="1">
    <citation type="submission" date="2008-10" db="EMBL/GenBank/DDBJ databases">
        <title>Genome sequence of Bacillus cereus G9842.</title>
        <authorList>
            <person name="Dodson R.J."/>
            <person name="Durkin A.S."/>
            <person name="Rosovitz M.J."/>
            <person name="Rasko D.A."/>
            <person name="Hoffmaster A."/>
            <person name="Ravel J."/>
            <person name="Sutton G."/>
        </authorList>
    </citation>
    <scope>NUCLEOTIDE SEQUENCE [LARGE SCALE GENOMIC DNA]</scope>
    <source>
        <strain>G9842</strain>
    </source>
</reference>
<sequence length="140" mass="15500">MPTINQLVRNGRTDKVWKSKSPALNKGFNSLKKKSTDISAPQKRGVCTRVGTMTPKKPNSALRKYARVRLTNGIEVTAYIPGIGHNLQEHSVVLIRGGRVKDLPGVRYHIVRGALDTAGVDKRMQGRSKYGTKRPKPAKK</sequence>
<gene>
    <name evidence="2" type="primary">rpsL</name>
    <name type="ordered locus">BCG9842_B5200</name>
</gene>
<protein>
    <recommendedName>
        <fullName evidence="2">Small ribosomal subunit protein uS12</fullName>
    </recommendedName>
    <alternativeName>
        <fullName evidence="3">30S ribosomal protein S12</fullName>
    </alternativeName>
</protein>
<organism>
    <name type="scientific">Bacillus cereus (strain G9842)</name>
    <dbReference type="NCBI Taxonomy" id="405531"/>
    <lineage>
        <taxon>Bacteria</taxon>
        <taxon>Bacillati</taxon>
        <taxon>Bacillota</taxon>
        <taxon>Bacilli</taxon>
        <taxon>Bacillales</taxon>
        <taxon>Bacillaceae</taxon>
        <taxon>Bacillus</taxon>
        <taxon>Bacillus cereus group</taxon>
    </lineage>
</organism>
<name>RS12_BACC2</name>
<comment type="function">
    <text evidence="2">With S4 and S5 plays an important role in translational accuracy.</text>
</comment>
<comment type="function">
    <text evidence="2">Interacts with and stabilizes bases of the 16S rRNA that are involved in tRNA selection in the A site and with the mRNA backbone. Located at the interface of the 30S and 50S subunits, it traverses the body of the 30S subunit contacting proteins on the other side and probably holding the rRNA structure together. The combined cluster of proteins S8, S12 and S17 appears to hold together the shoulder and platform of the 30S subunit.</text>
</comment>
<comment type="subunit">
    <text evidence="2">Part of the 30S ribosomal subunit. Contacts proteins S8 and S17. May interact with IF1 in the 30S initiation complex.</text>
</comment>
<comment type="similarity">
    <text evidence="2">Belongs to the universal ribosomal protein uS12 family.</text>
</comment>
<proteinExistence type="inferred from homology"/>
<feature type="chain" id="PRO_1000194126" description="Small ribosomal subunit protein uS12">
    <location>
        <begin position="1"/>
        <end position="140"/>
    </location>
</feature>
<feature type="modified residue" description="3-methylthioaspartic acid" evidence="1">
    <location>
        <position position="102"/>
    </location>
</feature>
<keyword id="KW-0488">Methylation</keyword>
<keyword id="KW-0687">Ribonucleoprotein</keyword>
<keyword id="KW-0689">Ribosomal protein</keyword>
<keyword id="KW-0694">RNA-binding</keyword>
<keyword id="KW-0699">rRNA-binding</keyword>
<keyword id="KW-0820">tRNA-binding</keyword>